<evidence type="ECO:0000255" key="1">
    <source>
        <dbReference type="HAMAP-Rule" id="MF_02076"/>
    </source>
</evidence>
<accession>Q50543</accession>
<accession>D9PV87</accession>
<keyword id="KW-0030">Aminoacyl-tRNA synthetase</keyword>
<keyword id="KW-0067">ATP-binding</keyword>
<keyword id="KW-0963">Cytoplasm</keyword>
<keyword id="KW-0436">Ligase</keyword>
<keyword id="KW-0547">Nucleotide-binding</keyword>
<keyword id="KW-0648">Protein biosynthesis</keyword>
<feature type="chain" id="PRO_0000119722" description="Glutamate--tRNA ligase">
    <location>
        <begin position="1"/>
        <end position="552"/>
    </location>
</feature>
<feature type="short sequence motif" description="'HIGH' region" evidence="1">
    <location>
        <begin position="102"/>
        <end position="112"/>
    </location>
</feature>
<organism>
    <name type="scientific">Methanothermobacter marburgensis (strain ATCC BAA-927 / DSM 2133 / JCM 14651 / NBRC 100331 / OCM 82 / Marburg)</name>
    <name type="common">Methanobacterium thermoautotrophicum</name>
    <dbReference type="NCBI Taxonomy" id="79929"/>
    <lineage>
        <taxon>Archaea</taxon>
        <taxon>Methanobacteriati</taxon>
        <taxon>Methanobacteriota</taxon>
        <taxon>Methanomada group</taxon>
        <taxon>Methanobacteria</taxon>
        <taxon>Methanobacteriales</taxon>
        <taxon>Methanobacteriaceae</taxon>
        <taxon>Methanothermobacter</taxon>
    </lineage>
</organism>
<dbReference type="EC" id="6.1.1.17" evidence="1"/>
<dbReference type="EMBL" id="U37405">
    <property type="protein sequence ID" value="AAC43972.1"/>
    <property type="molecule type" value="Genomic_DNA"/>
</dbReference>
<dbReference type="EMBL" id="CP001710">
    <property type="protein sequence ID" value="ADL58135.1"/>
    <property type="molecule type" value="Genomic_DNA"/>
</dbReference>
<dbReference type="RefSeq" id="WP_013295359.1">
    <property type="nucleotide sequence ID" value="NC_014408.1"/>
</dbReference>
<dbReference type="SMR" id="Q50543"/>
<dbReference type="STRING" id="79929.MTBMA_c05400"/>
<dbReference type="PaxDb" id="79929-MTBMA_c05400"/>
<dbReference type="GeneID" id="43708570"/>
<dbReference type="GeneID" id="9704248"/>
<dbReference type="KEGG" id="mmg:MTBMA_c05400"/>
<dbReference type="PATRIC" id="fig|79929.8.peg.524"/>
<dbReference type="HOGENOM" id="CLU_001882_1_3_2"/>
<dbReference type="Proteomes" id="UP000000345">
    <property type="component" value="Chromosome"/>
</dbReference>
<dbReference type="GO" id="GO:0005829">
    <property type="term" value="C:cytosol"/>
    <property type="evidence" value="ECO:0007669"/>
    <property type="project" value="TreeGrafter"/>
</dbReference>
<dbReference type="GO" id="GO:0032991">
    <property type="term" value="C:protein-containing complex"/>
    <property type="evidence" value="ECO:0007669"/>
    <property type="project" value="UniProtKB-ARBA"/>
</dbReference>
<dbReference type="GO" id="GO:0005524">
    <property type="term" value="F:ATP binding"/>
    <property type="evidence" value="ECO:0007669"/>
    <property type="project" value="UniProtKB-UniRule"/>
</dbReference>
<dbReference type="GO" id="GO:0004818">
    <property type="term" value="F:glutamate-tRNA ligase activity"/>
    <property type="evidence" value="ECO:0007669"/>
    <property type="project" value="UniProtKB-UniRule"/>
</dbReference>
<dbReference type="GO" id="GO:0043604">
    <property type="term" value="P:amide biosynthetic process"/>
    <property type="evidence" value="ECO:0007669"/>
    <property type="project" value="TreeGrafter"/>
</dbReference>
<dbReference type="GO" id="GO:0006424">
    <property type="term" value="P:glutamyl-tRNA aminoacylation"/>
    <property type="evidence" value="ECO:0007669"/>
    <property type="project" value="UniProtKB-UniRule"/>
</dbReference>
<dbReference type="CDD" id="cd09287">
    <property type="entry name" value="GluRS_non_core"/>
    <property type="match status" value="1"/>
</dbReference>
<dbReference type="Gene3D" id="2.40.240.100">
    <property type="match status" value="1"/>
</dbReference>
<dbReference type="Gene3D" id="3.40.50.620">
    <property type="entry name" value="HUPs"/>
    <property type="match status" value="1"/>
</dbReference>
<dbReference type="Gene3D" id="2.40.240.10">
    <property type="entry name" value="Ribosomal Protein L25, Chain P"/>
    <property type="match status" value="1"/>
</dbReference>
<dbReference type="HAMAP" id="MF_02076">
    <property type="entry name" value="Glu_tRNA_synth_type2"/>
    <property type="match status" value="1"/>
</dbReference>
<dbReference type="InterPro" id="IPR001412">
    <property type="entry name" value="aa-tRNA-synth_I_CS"/>
</dbReference>
<dbReference type="InterPro" id="IPR050132">
    <property type="entry name" value="Gln/Glu-tRNA_Ligase"/>
</dbReference>
<dbReference type="InterPro" id="IPR004526">
    <property type="entry name" value="Glu-tRNA-synth_arc/euk"/>
</dbReference>
<dbReference type="InterPro" id="IPR000924">
    <property type="entry name" value="Glu/Gln-tRNA-synth"/>
</dbReference>
<dbReference type="InterPro" id="IPR020058">
    <property type="entry name" value="Glu/Gln-tRNA-synth_Ib_cat-dom"/>
</dbReference>
<dbReference type="InterPro" id="IPR020059">
    <property type="entry name" value="Glu/Gln-tRNA-synth_Ib_codon-bd"/>
</dbReference>
<dbReference type="InterPro" id="IPR020056">
    <property type="entry name" value="Rbsml_bL25/Gln-tRNA_synth_N"/>
</dbReference>
<dbReference type="InterPro" id="IPR011035">
    <property type="entry name" value="Ribosomal_bL25/Gln-tRNA_synth"/>
</dbReference>
<dbReference type="InterPro" id="IPR014729">
    <property type="entry name" value="Rossmann-like_a/b/a_fold"/>
</dbReference>
<dbReference type="InterPro" id="IPR049437">
    <property type="entry name" value="tRNA-synt_1c_C2"/>
</dbReference>
<dbReference type="NCBIfam" id="TIGR00463">
    <property type="entry name" value="gltX_arch"/>
    <property type="match status" value="1"/>
</dbReference>
<dbReference type="NCBIfam" id="NF003169">
    <property type="entry name" value="PRK04156.1"/>
    <property type="match status" value="1"/>
</dbReference>
<dbReference type="PANTHER" id="PTHR43097:SF5">
    <property type="entry name" value="GLUTAMATE--TRNA LIGASE"/>
    <property type="match status" value="1"/>
</dbReference>
<dbReference type="PANTHER" id="PTHR43097">
    <property type="entry name" value="GLUTAMINE-TRNA LIGASE"/>
    <property type="match status" value="1"/>
</dbReference>
<dbReference type="Pfam" id="PF00749">
    <property type="entry name" value="tRNA-synt_1c"/>
    <property type="match status" value="1"/>
</dbReference>
<dbReference type="Pfam" id="PF03950">
    <property type="entry name" value="tRNA-synt_1c_C"/>
    <property type="match status" value="1"/>
</dbReference>
<dbReference type="Pfam" id="PF20974">
    <property type="entry name" value="tRNA-synt_1c_C2"/>
    <property type="match status" value="1"/>
</dbReference>
<dbReference type="PRINTS" id="PR00987">
    <property type="entry name" value="TRNASYNTHGLU"/>
</dbReference>
<dbReference type="SUPFAM" id="SSF52374">
    <property type="entry name" value="Nucleotidylyl transferase"/>
    <property type="match status" value="1"/>
</dbReference>
<dbReference type="SUPFAM" id="SSF50715">
    <property type="entry name" value="Ribosomal protein L25-like"/>
    <property type="match status" value="1"/>
</dbReference>
<dbReference type="PROSITE" id="PS00178">
    <property type="entry name" value="AA_TRNA_LIGASE_I"/>
    <property type="match status" value="1"/>
</dbReference>
<sequence>MMVEDLVYRYALMNAVKHKGKANPGAVMGAVMSNEPELRKRAPEVKEAVQAAVEKVNSLKPEEQQSEMERLGLEIRERKQKKRQGLRNLPDVKGEVVLRFAPNPSGPLHIGHARAAILNHEYARRYDGKLILRIEDTDPRRVDPEAYDMIPSDLEWLGVEWDETIIQSDRMEIYYEYTERLIERGGAYVCTCTPEAFREFKNEGKACHCRDLGVRENLQRWREMFEMPEGSAVVRVKTDLQHPNPAIRDWVSMRIVEAEHPRTGTRYRVYPMMNFSVAVDDHLLGVTHVLRGKDHLANSEKQEYLYRHLGWEPPVFIHYGRLKMDDIALSTSGAREGIVEGKYSGWDDPRLGTIRAIARRGIRSDAIRKLMVEIGVKIADSTMSWKKIYGLNRNILEEEARRYFFAADPVRFEIEGLPGPIRVERSLHPDKPELGNRILELNGDVYLPRGDLREGPLRLIDAVNVIYSDGELRYHSEGIEEARELQAAMIHWVPAESALKAVVVMPDASEIEGVIEGDASELEVDDVVQLERFGFARVDSSGERLVFYYAHK</sequence>
<comment type="function">
    <text evidence="1">Catalyzes the attachment of glutamate to tRNA(Glu) in a two-step reaction: glutamate is first activated by ATP to form Glu-AMP and then transferred to the acceptor end of tRNA(Glu).</text>
</comment>
<comment type="catalytic activity">
    <reaction evidence="1">
        <text>tRNA(Glu) + L-glutamate + ATP = L-glutamyl-tRNA(Glu) + AMP + diphosphate</text>
        <dbReference type="Rhea" id="RHEA:23540"/>
        <dbReference type="Rhea" id="RHEA-COMP:9663"/>
        <dbReference type="Rhea" id="RHEA-COMP:9680"/>
        <dbReference type="ChEBI" id="CHEBI:29985"/>
        <dbReference type="ChEBI" id="CHEBI:30616"/>
        <dbReference type="ChEBI" id="CHEBI:33019"/>
        <dbReference type="ChEBI" id="CHEBI:78442"/>
        <dbReference type="ChEBI" id="CHEBI:78520"/>
        <dbReference type="ChEBI" id="CHEBI:456215"/>
        <dbReference type="EC" id="6.1.1.17"/>
    </reaction>
</comment>
<comment type="subcellular location">
    <subcellularLocation>
        <location evidence="1">Cytoplasm</location>
    </subcellularLocation>
</comment>
<comment type="similarity">
    <text evidence="1">Belongs to the class-I aminoacyl-tRNA synthetase family. Glutamate--tRNA ligase type 2 subfamily.</text>
</comment>
<name>SYE_METTM</name>
<gene>
    <name evidence="1" type="primary">gltX</name>
    <name type="ordered locus">MTBMA_c05400</name>
</gene>
<proteinExistence type="inferred from homology"/>
<protein>
    <recommendedName>
        <fullName evidence="1">Glutamate--tRNA ligase</fullName>
        <ecNumber evidence="1">6.1.1.17</ecNumber>
    </recommendedName>
    <alternativeName>
        <fullName evidence="1">Glutamyl-tRNA synthetase</fullName>
        <shortName evidence="1">GluRS</shortName>
    </alternativeName>
</protein>
<reference key="1">
    <citation type="journal article" date="1996" name="Biochim. Biophys. Acta">
        <title>Identification of the gltX gene encoding glutamyl-tRNA synthetase from Methanobacterium thermoautotrophicum.</title>
        <authorList>
            <person name="Moore J.A."/>
            <person name="Chen A."/>
            <person name="Yan M."/>
            <person name="Hurlburt A.P."/>
            <person name="Poulter C.D."/>
        </authorList>
    </citation>
    <scope>NUCLEOTIDE SEQUENCE [GENOMIC DNA]</scope>
    <source>
        <strain>ATCC BAA-927 / DSM 2133 / JCM 14651 / NBRC 100331 / OCM 82 / Marburg</strain>
    </source>
</reference>
<reference key="2">
    <citation type="journal article" date="2010" name="J. Bacteriol.">
        <title>Complete genome sequence of Methanothermobacter marburgensis, a methanoarchaeon model organism.</title>
        <authorList>
            <person name="Liesegang H."/>
            <person name="Kaster A.K."/>
            <person name="Wiezer A."/>
            <person name="Goenrich M."/>
            <person name="Wollherr A."/>
            <person name="Seedorf H."/>
            <person name="Gottschalk G."/>
            <person name="Thauer R.K."/>
        </authorList>
    </citation>
    <scope>NUCLEOTIDE SEQUENCE [LARGE SCALE GENOMIC DNA]</scope>
    <source>
        <strain>ATCC BAA-927 / DSM 2133 / JCM 14651 / NBRC 100331 / OCM 82 / Marburg</strain>
    </source>
</reference>